<name>RPOE_STAAT</name>
<reference key="1">
    <citation type="journal article" date="2007" name="BMC Microbiol.">
        <title>Subtle genetic changes enhance virulence of methicillin resistant and sensitive Staphylococcus aureus.</title>
        <authorList>
            <person name="Highlander S.K."/>
            <person name="Hulten K.G."/>
            <person name="Qin X."/>
            <person name="Jiang H."/>
            <person name="Yerrapragada S."/>
            <person name="Mason E.O. Jr."/>
            <person name="Shang Y."/>
            <person name="Williams T.M."/>
            <person name="Fortunov R.M."/>
            <person name="Liu Y."/>
            <person name="Igboeli O."/>
            <person name="Petrosino J."/>
            <person name="Tirumalai M."/>
            <person name="Uzman A."/>
            <person name="Fox G.E."/>
            <person name="Cardenas A.M."/>
            <person name="Muzny D.M."/>
            <person name="Hemphill L."/>
            <person name="Ding Y."/>
            <person name="Dugan S."/>
            <person name="Blyth P.R."/>
            <person name="Buhay C.J."/>
            <person name="Dinh H.H."/>
            <person name="Hawes A.C."/>
            <person name="Holder M."/>
            <person name="Kovar C.L."/>
            <person name="Lee S.L."/>
            <person name="Liu W."/>
            <person name="Nazareth L.V."/>
            <person name="Wang Q."/>
            <person name="Zhou J."/>
            <person name="Kaplan S.L."/>
            <person name="Weinstock G.M."/>
        </authorList>
    </citation>
    <scope>NUCLEOTIDE SEQUENCE [LARGE SCALE GENOMIC DNA]</scope>
    <source>
        <strain>USA300 / TCH1516</strain>
    </source>
</reference>
<protein>
    <recommendedName>
        <fullName evidence="1">Probable DNA-directed RNA polymerase subunit delta</fullName>
    </recommendedName>
    <alternativeName>
        <fullName evidence="1">RNAP delta factor</fullName>
    </alternativeName>
</protein>
<proteinExistence type="inferred from homology"/>
<organism>
    <name type="scientific">Staphylococcus aureus (strain USA300 / TCH1516)</name>
    <dbReference type="NCBI Taxonomy" id="451516"/>
    <lineage>
        <taxon>Bacteria</taxon>
        <taxon>Bacillati</taxon>
        <taxon>Bacillota</taxon>
        <taxon>Bacilli</taxon>
        <taxon>Bacillales</taxon>
        <taxon>Staphylococcaceae</taxon>
        <taxon>Staphylococcus</taxon>
    </lineage>
</organism>
<feature type="chain" id="PRO_1000079392" description="Probable DNA-directed RNA polymerase subunit delta">
    <location>
        <begin position="1"/>
        <end position="176"/>
    </location>
</feature>
<feature type="domain" description="HTH HARE-type" evidence="2">
    <location>
        <begin position="14"/>
        <end position="81"/>
    </location>
</feature>
<feature type="region of interest" description="Disordered" evidence="3">
    <location>
        <begin position="114"/>
        <end position="176"/>
    </location>
</feature>
<feature type="compositionally biased region" description="Acidic residues" evidence="3">
    <location>
        <begin position="116"/>
        <end position="145"/>
    </location>
</feature>
<feature type="compositionally biased region" description="Acidic residues" evidence="3">
    <location>
        <begin position="153"/>
        <end position="176"/>
    </location>
</feature>
<sequence>MKIQDYTKQMVDEKSFIDMAYTLLNDKGETMNLYDIIDEFRALGDYEYEEIENRVVQFYTDLNTDGRFLNVGENLWGLRDWYSVDDIEEKIAPTIQKFDILDADDEEDQNLKLLGEDEMDDDDDIPAQTDDQEELNDPEDEQVEEEINHSDIVIEEDEDELDEDEEVFEDEEDFND</sequence>
<gene>
    <name evidence="1" type="primary">rpoE</name>
    <name type="ordered locus">USA300HOU_2116</name>
</gene>
<accession>A8YY93</accession>
<evidence type="ECO:0000255" key="1">
    <source>
        <dbReference type="HAMAP-Rule" id="MF_00357"/>
    </source>
</evidence>
<evidence type="ECO:0000255" key="2">
    <source>
        <dbReference type="PROSITE-ProRule" id="PRU01261"/>
    </source>
</evidence>
<evidence type="ECO:0000256" key="3">
    <source>
        <dbReference type="SAM" id="MobiDB-lite"/>
    </source>
</evidence>
<comment type="function">
    <text evidence="1">Participates in both the initiation and recycling phases of transcription. In the presence of the delta subunit, RNAP displays an increased specificity of transcription, a decreased affinity for nucleic acids, and an increased efficiency of RNA synthesis because of enhanced recycling.</text>
</comment>
<comment type="subunit">
    <text evidence="1">RNAP is composed of a core of 2 alpha, a beta and a beta' subunits. The core is associated with a delta subunit and one of several sigma factors.</text>
</comment>
<comment type="similarity">
    <text evidence="1">Belongs to the RpoE family.</text>
</comment>
<keyword id="KW-0240">DNA-directed RNA polymerase</keyword>
<keyword id="KW-0548">Nucleotidyltransferase</keyword>
<keyword id="KW-0804">Transcription</keyword>
<keyword id="KW-0808">Transferase</keyword>
<dbReference type="EMBL" id="CP000730">
    <property type="protein sequence ID" value="ABX30113.1"/>
    <property type="molecule type" value="Genomic_DNA"/>
</dbReference>
<dbReference type="RefSeq" id="WP_000701483.1">
    <property type="nucleotide sequence ID" value="NC_010079.1"/>
</dbReference>
<dbReference type="SMR" id="A8YY93"/>
<dbReference type="GeneID" id="98346435"/>
<dbReference type="KEGG" id="sax:USA300HOU_2116"/>
<dbReference type="HOGENOM" id="CLU_116648_1_0_9"/>
<dbReference type="GO" id="GO:0000428">
    <property type="term" value="C:DNA-directed RNA polymerase complex"/>
    <property type="evidence" value="ECO:0007669"/>
    <property type="project" value="UniProtKB-KW"/>
</dbReference>
<dbReference type="GO" id="GO:0003899">
    <property type="term" value="F:DNA-directed RNA polymerase activity"/>
    <property type="evidence" value="ECO:0007669"/>
    <property type="project" value="UniProtKB-UniRule"/>
</dbReference>
<dbReference type="GO" id="GO:0006351">
    <property type="term" value="P:DNA-templated transcription"/>
    <property type="evidence" value="ECO:0007669"/>
    <property type="project" value="InterPro"/>
</dbReference>
<dbReference type="GO" id="GO:0006355">
    <property type="term" value="P:regulation of DNA-templated transcription"/>
    <property type="evidence" value="ECO:0007669"/>
    <property type="project" value="UniProtKB-UniRule"/>
</dbReference>
<dbReference type="Gene3D" id="1.10.10.1250">
    <property type="entry name" value="RNA polymerase, subunit delta, N-terminal domain"/>
    <property type="match status" value="1"/>
</dbReference>
<dbReference type="HAMAP" id="MF_00357">
    <property type="entry name" value="RNApol_bact_RpoE"/>
    <property type="match status" value="1"/>
</dbReference>
<dbReference type="InterPro" id="IPR007759">
    <property type="entry name" value="Asxl_HARE-HTH"/>
</dbReference>
<dbReference type="InterPro" id="IPR038087">
    <property type="entry name" value="RNAP_delta_N_dom_sf"/>
</dbReference>
<dbReference type="InterPro" id="IPR029757">
    <property type="entry name" value="RpoE"/>
</dbReference>
<dbReference type="NCBIfam" id="TIGR04567">
    <property type="entry name" value="RNAP_delt_lowGC"/>
    <property type="match status" value="1"/>
</dbReference>
<dbReference type="Pfam" id="PF05066">
    <property type="entry name" value="HARE-HTH"/>
    <property type="match status" value="1"/>
</dbReference>
<dbReference type="PROSITE" id="PS51913">
    <property type="entry name" value="HTH_HARE"/>
    <property type="match status" value="1"/>
</dbReference>